<feature type="chain" id="PRO_0000391740" description="Abscisic acid receptor PYL5">
    <location>
        <begin position="1"/>
        <end position="203"/>
    </location>
</feature>
<feature type="region of interest" description="Disordered" evidence="5">
    <location>
        <begin position="1"/>
        <end position="29"/>
    </location>
</feature>
<feature type="region of interest" description="START-like">
    <location>
        <begin position="51"/>
        <end position="201"/>
    </location>
</feature>
<feature type="short sequence motif" description="Gate loop" evidence="4">
    <location>
        <begin position="113"/>
        <end position="117"/>
    </location>
</feature>
<feature type="short sequence motif" description="Latch loop" evidence="4">
    <location>
        <begin position="143"/>
        <end position="145"/>
    </location>
</feature>
<feature type="compositionally biased region" description="Polar residues" evidence="5">
    <location>
        <begin position="1"/>
        <end position="18"/>
    </location>
</feature>
<feature type="binding site" evidence="1">
    <location>
        <position position="87"/>
    </location>
    <ligand>
        <name>abscisate</name>
        <dbReference type="ChEBI" id="CHEBI:62432"/>
    </ligand>
</feature>
<feature type="binding site" evidence="1">
    <location>
        <begin position="117"/>
        <end position="122"/>
    </location>
    <ligand>
        <name>abscisate</name>
        <dbReference type="ChEBI" id="CHEBI:62432"/>
    </ligand>
</feature>
<feature type="binding site" evidence="1">
    <location>
        <begin position="144"/>
        <end position="150"/>
    </location>
    <ligand>
        <name>abscisate</name>
        <dbReference type="ChEBI" id="CHEBI:62432"/>
    </ligand>
</feature>
<feature type="binding site" evidence="1">
    <location>
        <position position="166"/>
    </location>
    <ligand>
        <name>abscisate</name>
        <dbReference type="ChEBI" id="CHEBI:62432"/>
    </ligand>
</feature>
<feature type="site" description="Involved in interactions with PP2Cs" evidence="1">
    <location>
        <position position="116"/>
    </location>
</feature>
<feature type="site" description="Involved in interactions with PP2Cs" evidence="1">
    <location>
        <position position="177"/>
    </location>
</feature>
<feature type="site" description="Involved in ABA binding" evidence="3">
    <location>
        <position position="185"/>
    </location>
</feature>
<feature type="helix" evidence="13">
    <location>
        <begin position="42"/>
        <end position="45"/>
    </location>
</feature>
<feature type="turn" evidence="13">
    <location>
        <begin position="47"/>
        <end position="49"/>
    </location>
</feature>
<feature type="strand" evidence="13">
    <location>
        <begin position="57"/>
        <end position="60"/>
    </location>
</feature>
<feature type="helix" evidence="13">
    <location>
        <begin position="70"/>
        <end position="78"/>
    </location>
</feature>
<feature type="turn" evidence="13">
    <location>
        <begin position="84"/>
        <end position="86"/>
    </location>
</feature>
<feature type="strand" evidence="13">
    <location>
        <begin position="125"/>
        <end position="128"/>
    </location>
</feature>
<feature type="turn" evidence="13">
    <location>
        <begin position="129"/>
        <end position="132"/>
    </location>
</feature>
<feature type="strand" evidence="13">
    <location>
        <begin position="133"/>
        <end position="135"/>
    </location>
</feature>
<feature type="strand" evidence="13">
    <location>
        <begin position="151"/>
        <end position="153"/>
    </location>
</feature>
<feature type="strand" evidence="13">
    <location>
        <begin position="165"/>
        <end position="172"/>
    </location>
</feature>
<feature type="strand" evidence="13">
    <location>
        <begin position="174"/>
        <end position="176"/>
    </location>
</feature>
<feature type="helix" evidence="13">
    <location>
        <begin position="181"/>
        <end position="199"/>
    </location>
</feature>
<feature type="turn" evidence="13">
    <location>
        <begin position="200"/>
        <end position="202"/>
    </location>
</feature>
<organism>
    <name type="scientific">Arabidopsis thaliana</name>
    <name type="common">Mouse-ear cress</name>
    <dbReference type="NCBI Taxonomy" id="3702"/>
    <lineage>
        <taxon>Eukaryota</taxon>
        <taxon>Viridiplantae</taxon>
        <taxon>Streptophyta</taxon>
        <taxon>Embryophyta</taxon>
        <taxon>Tracheophyta</taxon>
        <taxon>Spermatophyta</taxon>
        <taxon>Magnoliopsida</taxon>
        <taxon>eudicotyledons</taxon>
        <taxon>Gunneridae</taxon>
        <taxon>Pentapetalae</taxon>
        <taxon>rosids</taxon>
        <taxon>malvids</taxon>
        <taxon>Brassicales</taxon>
        <taxon>Brassicaceae</taxon>
        <taxon>Camelineae</taxon>
        <taxon>Arabidopsis</taxon>
    </lineage>
</organism>
<name>PYL5_ARATH</name>
<gene>
    <name type="primary">PYL5</name>
    <name type="synonym">ABIP3</name>
    <name type="synonym">RCAR8</name>
    <name type="ordered locus">At5g05440</name>
    <name type="ORF">K18I23.25</name>
</gene>
<protein>
    <recommendedName>
        <fullName>Abscisic acid receptor PYL5</fullName>
    </recommendedName>
    <alternativeName>
        <fullName>ABI1-binding protein 3</fullName>
    </alternativeName>
    <alternativeName>
        <fullName>PYR1-like protein 5</fullName>
    </alternativeName>
    <alternativeName>
        <fullName>Regulatory components of ABA receptor 8</fullName>
    </alternativeName>
</protein>
<dbReference type="EMBL" id="AB010692">
    <property type="protein sequence ID" value="BAB09987.1"/>
    <property type="molecule type" value="Genomic_DNA"/>
</dbReference>
<dbReference type="EMBL" id="CP002688">
    <property type="protein sequence ID" value="AED90874.1"/>
    <property type="molecule type" value="Genomic_DNA"/>
</dbReference>
<dbReference type="EMBL" id="AY052251">
    <property type="protein sequence ID" value="AAK97721.1"/>
    <property type="molecule type" value="mRNA"/>
</dbReference>
<dbReference type="EMBL" id="AY060510">
    <property type="protein sequence ID" value="AAL31123.1"/>
    <property type="molecule type" value="mRNA"/>
</dbReference>
<dbReference type="EMBL" id="BT000728">
    <property type="protein sequence ID" value="AAN31870.1"/>
    <property type="molecule type" value="mRNA"/>
</dbReference>
<dbReference type="EMBL" id="AY084767">
    <property type="protein sequence ID" value="AAM61335.1"/>
    <property type="molecule type" value="mRNA"/>
</dbReference>
<dbReference type="RefSeq" id="NP_196163.1">
    <property type="nucleotide sequence ID" value="NM_120626.3"/>
</dbReference>
<dbReference type="PDB" id="4JDL">
    <property type="method" value="X-ray"/>
    <property type="resolution" value="2.60 A"/>
    <property type="chains" value="A/B/C=1-203"/>
</dbReference>
<dbReference type="PDBsum" id="4JDL"/>
<dbReference type="SMR" id="Q9FLB1"/>
<dbReference type="BioGRID" id="15706">
    <property type="interactions" value="15"/>
</dbReference>
<dbReference type="DIP" id="DIP-53483N"/>
<dbReference type="FunCoup" id="Q9FLB1">
    <property type="interactions" value="369"/>
</dbReference>
<dbReference type="IntAct" id="Q9FLB1">
    <property type="interactions" value="13"/>
</dbReference>
<dbReference type="MINT" id="Q9FLB1"/>
<dbReference type="STRING" id="3702.Q9FLB1"/>
<dbReference type="iPTMnet" id="Q9FLB1"/>
<dbReference type="PaxDb" id="3702-AT5G05440.1"/>
<dbReference type="ProteomicsDB" id="224809"/>
<dbReference type="EnsemblPlants" id="AT5G05440.1">
    <property type="protein sequence ID" value="AT5G05440.1"/>
    <property type="gene ID" value="AT5G05440"/>
</dbReference>
<dbReference type="GeneID" id="830427"/>
<dbReference type="Gramene" id="AT5G05440.1">
    <property type="protein sequence ID" value="AT5G05440.1"/>
    <property type="gene ID" value="AT5G05440"/>
</dbReference>
<dbReference type="KEGG" id="ath:AT5G05440"/>
<dbReference type="Araport" id="AT5G05440"/>
<dbReference type="TAIR" id="AT5G05440">
    <property type="gene designation" value="PYL5"/>
</dbReference>
<dbReference type="eggNOG" id="ENOG502QWFG">
    <property type="taxonomic scope" value="Eukaryota"/>
</dbReference>
<dbReference type="HOGENOM" id="CLU_077517_0_0_1"/>
<dbReference type="InParanoid" id="Q9FLB1"/>
<dbReference type="OMA" id="ARCPRET"/>
<dbReference type="OrthoDB" id="4436220at2759"/>
<dbReference type="PhylomeDB" id="Q9FLB1"/>
<dbReference type="EvolutionaryTrace" id="Q9FLB1"/>
<dbReference type="PRO" id="PR:Q9FLB1"/>
<dbReference type="Proteomes" id="UP000006548">
    <property type="component" value="Chromosome 5"/>
</dbReference>
<dbReference type="ExpressionAtlas" id="Q9FLB1">
    <property type="expression patterns" value="baseline and differential"/>
</dbReference>
<dbReference type="GO" id="GO:0005737">
    <property type="term" value="C:cytoplasm"/>
    <property type="evidence" value="ECO:0000314"/>
    <property type="project" value="UniProtKB"/>
</dbReference>
<dbReference type="GO" id="GO:0005634">
    <property type="term" value="C:nucleus"/>
    <property type="evidence" value="ECO:0000314"/>
    <property type="project" value="UniProtKB"/>
</dbReference>
<dbReference type="GO" id="GO:0005886">
    <property type="term" value="C:plasma membrane"/>
    <property type="evidence" value="ECO:0007669"/>
    <property type="project" value="UniProtKB-SubCell"/>
</dbReference>
<dbReference type="GO" id="GO:0010427">
    <property type="term" value="F:abscisic acid binding"/>
    <property type="evidence" value="ECO:0000314"/>
    <property type="project" value="UniProtKB"/>
</dbReference>
<dbReference type="GO" id="GO:0004864">
    <property type="term" value="F:protein phosphatase inhibitor activity"/>
    <property type="evidence" value="ECO:0000314"/>
    <property type="project" value="UniProtKB"/>
</dbReference>
<dbReference type="GO" id="GO:0038023">
    <property type="term" value="F:signaling receptor activity"/>
    <property type="evidence" value="ECO:0000314"/>
    <property type="project" value="UniProtKB"/>
</dbReference>
<dbReference type="GO" id="GO:0009738">
    <property type="term" value="P:abscisic acid-activated signaling pathway"/>
    <property type="evidence" value="ECO:0000314"/>
    <property type="project" value="UniProtKB"/>
</dbReference>
<dbReference type="CDD" id="cd07821">
    <property type="entry name" value="PYR_PYL_RCAR_like"/>
    <property type="match status" value="1"/>
</dbReference>
<dbReference type="FunFam" id="3.30.530.20:FF:000021">
    <property type="entry name" value="Abscisic acid receptor PYL5"/>
    <property type="match status" value="1"/>
</dbReference>
<dbReference type="Gene3D" id="3.30.530.20">
    <property type="match status" value="1"/>
</dbReference>
<dbReference type="InterPro" id="IPR050279">
    <property type="entry name" value="Plant_def-hormone_signal"/>
</dbReference>
<dbReference type="InterPro" id="IPR019587">
    <property type="entry name" value="Polyketide_cyclase/dehydratase"/>
</dbReference>
<dbReference type="InterPro" id="IPR023393">
    <property type="entry name" value="START-like_dom_sf"/>
</dbReference>
<dbReference type="PANTHER" id="PTHR31213:SF183">
    <property type="entry name" value="ABSCISIC ACID RECEPTOR PYL5"/>
    <property type="match status" value="1"/>
</dbReference>
<dbReference type="PANTHER" id="PTHR31213">
    <property type="entry name" value="OS08G0374000 PROTEIN-RELATED"/>
    <property type="match status" value="1"/>
</dbReference>
<dbReference type="Pfam" id="PF10604">
    <property type="entry name" value="Polyketide_cyc2"/>
    <property type="match status" value="1"/>
</dbReference>
<dbReference type="SUPFAM" id="SSF55961">
    <property type="entry name" value="Bet v1-like"/>
    <property type="match status" value="1"/>
</dbReference>
<proteinExistence type="evidence at protein level"/>
<sequence>MRSPVQLQHGSDATNGFHTLQPHDQTDGPIKRVCLTRGMHVPEHVAMHHTHDVGPDQCCSSVVQMIHAPPESVWALVRRFDNPKVYKNFIRQCRIVQGDGLHVGDLREVMVVSGLPAVSSTERLEILDEERHVISFSVVGGDHRLKNYRSVTTLHASDDEGTVVVESYIVDVPPGNTEEETLSFVDTIVRCNLQSLARSTNRQ</sequence>
<accession>Q9FLB1</accession>
<keyword id="KW-0002">3D-structure</keyword>
<keyword id="KW-0938">Abscisic acid signaling pathway</keyword>
<keyword id="KW-1003">Cell membrane</keyword>
<keyword id="KW-0963">Cytoplasm</keyword>
<keyword id="KW-0472">Membrane</keyword>
<keyword id="KW-0539">Nucleus</keyword>
<keyword id="KW-0650">Protein phosphatase inhibitor</keyword>
<keyword id="KW-0675">Receptor</keyword>
<keyword id="KW-1185">Reference proteome</keyword>
<reference key="1">
    <citation type="journal article" date="1998" name="DNA Res.">
        <title>Structural analysis of Arabidopsis thaliana chromosome 5. V. Sequence features of the regions of 1,381,565 bp covered by twenty one physically assigned P1 and TAC clones.</title>
        <authorList>
            <person name="Kaneko T."/>
            <person name="Kotani H."/>
            <person name="Nakamura Y."/>
            <person name="Sato S."/>
            <person name="Asamizu E."/>
            <person name="Miyajima N."/>
            <person name="Tabata S."/>
        </authorList>
    </citation>
    <scope>NUCLEOTIDE SEQUENCE [LARGE SCALE GENOMIC DNA]</scope>
    <source>
        <strain>cv. Columbia</strain>
    </source>
</reference>
<reference key="2">
    <citation type="journal article" date="2017" name="Plant J.">
        <title>Araport11: a complete reannotation of the Arabidopsis thaliana reference genome.</title>
        <authorList>
            <person name="Cheng C.Y."/>
            <person name="Krishnakumar V."/>
            <person name="Chan A.P."/>
            <person name="Thibaud-Nissen F."/>
            <person name="Schobel S."/>
            <person name="Town C.D."/>
        </authorList>
    </citation>
    <scope>GENOME REANNOTATION</scope>
    <source>
        <strain>cv. Columbia</strain>
    </source>
</reference>
<reference key="3">
    <citation type="journal article" date="2003" name="Science">
        <title>Empirical analysis of transcriptional activity in the Arabidopsis genome.</title>
        <authorList>
            <person name="Yamada K."/>
            <person name="Lim J."/>
            <person name="Dale J.M."/>
            <person name="Chen H."/>
            <person name="Shinn P."/>
            <person name="Palm C.J."/>
            <person name="Southwick A.M."/>
            <person name="Wu H.C."/>
            <person name="Kim C.J."/>
            <person name="Nguyen M."/>
            <person name="Pham P.K."/>
            <person name="Cheuk R.F."/>
            <person name="Karlin-Newmann G."/>
            <person name="Liu S.X."/>
            <person name="Lam B."/>
            <person name="Sakano H."/>
            <person name="Wu T."/>
            <person name="Yu G."/>
            <person name="Miranda M."/>
            <person name="Quach H.L."/>
            <person name="Tripp M."/>
            <person name="Chang C.H."/>
            <person name="Lee J.M."/>
            <person name="Toriumi M.J."/>
            <person name="Chan M.M."/>
            <person name="Tang C.C."/>
            <person name="Onodera C.S."/>
            <person name="Deng J.M."/>
            <person name="Akiyama K."/>
            <person name="Ansari Y."/>
            <person name="Arakawa T."/>
            <person name="Banh J."/>
            <person name="Banno F."/>
            <person name="Bowser L."/>
            <person name="Brooks S.Y."/>
            <person name="Carninci P."/>
            <person name="Chao Q."/>
            <person name="Choy N."/>
            <person name="Enju A."/>
            <person name="Goldsmith A.D."/>
            <person name="Gurjal M."/>
            <person name="Hansen N.F."/>
            <person name="Hayashizaki Y."/>
            <person name="Johnson-Hopson C."/>
            <person name="Hsuan V.W."/>
            <person name="Iida K."/>
            <person name="Karnes M."/>
            <person name="Khan S."/>
            <person name="Koesema E."/>
            <person name="Ishida J."/>
            <person name="Jiang P.X."/>
            <person name="Jones T."/>
            <person name="Kawai J."/>
            <person name="Kamiya A."/>
            <person name="Meyers C."/>
            <person name="Nakajima M."/>
            <person name="Narusaka M."/>
            <person name="Seki M."/>
            <person name="Sakurai T."/>
            <person name="Satou M."/>
            <person name="Tamse R."/>
            <person name="Vaysberg M."/>
            <person name="Wallender E.K."/>
            <person name="Wong C."/>
            <person name="Yamamura Y."/>
            <person name="Yuan S."/>
            <person name="Shinozaki K."/>
            <person name="Davis R.W."/>
            <person name="Theologis A."/>
            <person name="Ecker J.R."/>
        </authorList>
    </citation>
    <scope>NUCLEOTIDE SEQUENCE [LARGE SCALE MRNA]</scope>
    <source>
        <strain>cv. Columbia</strain>
    </source>
</reference>
<reference key="4">
    <citation type="submission" date="2002-03" db="EMBL/GenBank/DDBJ databases">
        <title>Full-length cDNA from Arabidopsis thaliana.</title>
        <authorList>
            <person name="Brover V.V."/>
            <person name="Troukhan M.E."/>
            <person name="Alexandrov N.A."/>
            <person name="Lu Y.-P."/>
            <person name="Flavell R.B."/>
            <person name="Feldmann K.A."/>
        </authorList>
    </citation>
    <scope>NUCLEOTIDE SEQUENCE [LARGE SCALE MRNA]</scope>
</reference>
<reference key="5">
    <citation type="journal article" date="2009" name="Nature">
        <title>A gate-latch-lock mechanism for hormone signalling by abscisic acid receptors.</title>
        <authorList>
            <person name="Melcher K."/>
            <person name="Ng L.-M."/>
            <person name="Zhou X.E."/>
            <person name="Soon F.-F."/>
            <person name="Xu Y."/>
            <person name="Suino-Powell K.M."/>
            <person name="Park S.-Y."/>
            <person name="Weiner J.J."/>
            <person name="Fujii H."/>
            <person name="Chinnusamy V."/>
            <person name="Kovach A."/>
            <person name="Li J."/>
            <person name="Wang Y."/>
            <person name="Li J."/>
            <person name="Peterson F.C."/>
            <person name="Jensen D.R."/>
            <person name="Yong E.-L."/>
            <person name="Volkman B.F."/>
            <person name="Cutler S.R."/>
            <person name="Zhu J.-K."/>
            <person name="Xu H.E."/>
        </authorList>
    </citation>
    <scope>INTERACTION WITH HAB1; ABI1 AND ABI2</scope>
</reference>
<reference key="6">
    <citation type="journal article" date="2009" name="Plant J.">
        <title>Modulation of drought resistance by the abscisic acid receptor PYL5 through inhibition of clade A PP2Cs.</title>
        <authorList>
            <person name="Santiago J."/>
            <person name="Rodrigues A."/>
            <person name="Saez A."/>
            <person name="Rubio S."/>
            <person name="Antoni R."/>
            <person name="Dupeux F."/>
            <person name="Park S.-Y."/>
            <person name="Marquez J.A."/>
            <person name="Cutler S.R."/>
            <person name="Rodriguez P.L."/>
        </authorList>
    </citation>
    <scope>FUNCTION</scope>
    <scope>SUBCELLULAR LOCATION</scope>
    <scope>INTERACTION WITH HAB1</scope>
</reference>
<reference key="7">
    <citation type="journal article" date="2010" name="Plant J.">
        <title>PYR/PYL/RCAR family members are major in-vivo ABI1 protein phosphatase 2C-interacting proteins in Arabidopsis.</title>
        <authorList>
            <person name="Nishimura N."/>
            <person name="Sarkeshik A."/>
            <person name="Nito K."/>
            <person name="Park S.-Y."/>
            <person name="Wang A."/>
            <person name="Carvalho P.C."/>
            <person name="Lee S."/>
            <person name="Caddell D.F."/>
            <person name="Cutler S.R."/>
            <person name="Chory J."/>
            <person name="Yates J.R."/>
            <person name="Schroeder J.I."/>
        </authorList>
    </citation>
    <scope>INTERACTION WITH ABI1</scope>
    <scope>IDENTIFICATION BY MASS SPECTROMETRY</scope>
</reference>
<reference key="8">
    <citation type="journal article" date="2009" name="Science">
        <title>Regulators of PP2C phosphatase activity function as abscisic acid sensors.</title>
        <authorList>
            <person name="Ma Y."/>
            <person name="Szostkiewicz I."/>
            <person name="Korte A."/>
            <person name="Moes D."/>
            <person name="Yang Y."/>
            <person name="Christmann A."/>
            <person name="Grill E."/>
        </authorList>
    </citation>
    <scope>FUNCTION</scope>
    <scope>GENE FAMILY</scope>
</reference>
<reference key="9">
    <citation type="journal article" date="2009" name="Science">
        <title>Abscisic acid inhibits type 2C protein phosphatases via the PYR/PYL family of START proteins.</title>
        <authorList>
            <person name="Park S.-Y."/>
            <person name="Fung P."/>
            <person name="Nishimura N."/>
            <person name="Jensen D.R."/>
            <person name="Fujii H."/>
            <person name="Zhao Y."/>
            <person name="Lumba S."/>
            <person name="Santiago J."/>
            <person name="Rodrigues A."/>
            <person name="Chow T.F."/>
            <person name="Alfred S.E."/>
            <person name="Bonetta D."/>
            <person name="Finkelstein R."/>
            <person name="Provart N.J."/>
            <person name="Desveaux D."/>
            <person name="Rodriguez P.L."/>
            <person name="McCourt P."/>
            <person name="Zhu J.-K."/>
            <person name="Schroeder J.I."/>
            <person name="Volkman B.F."/>
            <person name="Cutler S.R."/>
        </authorList>
    </citation>
    <scope>GENE FAMILY</scope>
    <scope>NOMENCLATURE</scope>
</reference>
<reference key="10">
    <citation type="journal article" date="2011" name="Mol. Cell">
        <title>The molecular basis of ABA-independent inhibition of PP2Cs by a subclass of PYL proteins.</title>
        <authorList>
            <person name="Hao Q."/>
            <person name="Yin P."/>
            <person name="Li W."/>
            <person name="Wang L."/>
            <person name="Yan C."/>
            <person name="Lin Z."/>
            <person name="Wu J.Z."/>
            <person name="Wang J."/>
            <person name="Yan S.F."/>
            <person name="Yan N."/>
        </authorList>
    </citation>
    <scope>FUNCTION</scope>
    <scope>MONOMER</scope>
    <scope>GENE FAMILY</scope>
</reference>
<reference key="11">
    <citation type="journal article" date="2013" name="PLoS ONE">
        <title>Structural insights into the abscisic acid stereospecificity by the ABA receptors PYR/PYL/RCAR.</title>
        <authorList>
            <person name="Zhang X."/>
            <person name="Jiang L."/>
            <person name="Wang G."/>
            <person name="Yu L."/>
            <person name="Zhang Q."/>
            <person name="Xin Q."/>
            <person name="Wu W."/>
            <person name="Gong Z."/>
            <person name="Chen Z."/>
        </authorList>
    </citation>
    <scope>X-RAY CRYSTALLOGRAPHY (2.65 ANGSTROMS)</scope>
    <scope>FUNCTION</scope>
    <scope>INTERACTION WITH ABA</scope>
    <scope>GENE FAMILY</scope>
</reference>
<evidence type="ECO:0000250" key="1">
    <source>
        <dbReference type="UniProtKB" id="O49686"/>
    </source>
</evidence>
<evidence type="ECO:0000250" key="2">
    <source>
        <dbReference type="UniProtKB" id="O80920"/>
    </source>
</evidence>
<evidence type="ECO:0000250" key="3">
    <source>
        <dbReference type="UniProtKB" id="Q84MC7"/>
    </source>
</evidence>
<evidence type="ECO:0000250" key="4">
    <source>
        <dbReference type="UniProtKB" id="Q8VZS8"/>
    </source>
</evidence>
<evidence type="ECO:0000256" key="5">
    <source>
        <dbReference type="SAM" id="MobiDB-lite"/>
    </source>
</evidence>
<evidence type="ECO:0000269" key="6">
    <source>
    </source>
</evidence>
<evidence type="ECO:0000269" key="7">
    <source>
    </source>
</evidence>
<evidence type="ECO:0000269" key="8">
    <source>
    </source>
</evidence>
<evidence type="ECO:0000269" key="9">
    <source>
    </source>
</evidence>
<evidence type="ECO:0000269" key="10">
    <source>
    </source>
</evidence>
<evidence type="ECO:0000269" key="11">
    <source>
    </source>
</evidence>
<evidence type="ECO:0000305" key="12"/>
<evidence type="ECO:0007829" key="13">
    <source>
        <dbReference type="PDB" id="4JDL"/>
    </source>
</evidence>
<comment type="function">
    <text evidence="6 7 10 11">Receptor for abscisic acid (ABA) required for ABA-mediated responses such as stomatal closure and germination inhibition. Inhibits the activity of group-A protein phosphatases type 2C (PP2Cs) in an ABA-independent manner but more efficiently when activated by ABA. Confers enhanced sensitivity to ABA (PubMed:19407143, PubMed:19624469, PubMed:21658606, PubMed:23844015). Can be activated by both (-)-ABA and (+)-ABA (PubMed:23844015).</text>
</comment>
<comment type="subunit">
    <text evidence="1 7 8 9 10 11">Monomer (PubMed:21658606). Homodimer. Binds ABA on one subunit only. Binds to CARs protein in an ABA-independent manner, both at the plasma membrane and in the nucleus (By similarity). Binds both (-)-ABA and (+)-ABA (PubMed:23844015). Interacts with HAB1, ABI1 and ABI2, and possibly with other PP2Cs (PubMed:19624469, PubMed:19874541, PubMed:19898420).</text>
</comment>
<comment type="interaction">
    <interactant intactId="EBI-2363181">
        <id>Q9FLB1</id>
    </interactant>
    <interactant intactId="EBI-782526">
        <id>P49597</id>
        <label>ABI1</label>
    </interactant>
    <organismsDiffer>false</organismsDiffer>
    <experiments>12</experiments>
</comment>
<comment type="interaction">
    <interactant intactId="EBI-2363181">
        <id>Q9FLB1</id>
    </interactant>
    <interactant intactId="EBI-537680">
        <id>O04719</id>
        <label>ABI2</label>
    </interactant>
    <organismsDiffer>false</organismsDiffer>
    <experiments>4</experiments>
</comment>
<comment type="interaction">
    <interactant intactId="EBI-2363181">
        <id>Q9FLB1</id>
    </interactant>
    <interactant intactId="EBI-15803514">
        <id>O04719-1</id>
        <label>ABI2</label>
    </interactant>
    <organismsDiffer>false</organismsDiffer>
    <experiments>2</experiments>
</comment>
<comment type="interaction">
    <interactant intactId="EBI-2363181">
        <id>Q9FLB1</id>
    </interactant>
    <interactant intactId="EBI-1573499">
        <id>Q9LNW3</id>
        <label>AIP1</label>
    </interactant>
    <organismsDiffer>false</organismsDiffer>
    <experiments>3</experiments>
</comment>
<comment type="interaction">
    <interactant intactId="EBI-2363181">
        <id>Q9FLB1</id>
    </interactant>
    <interactant intactId="EBI-4441103">
        <id>Q9ZW21</id>
        <label>At2g29380</label>
    </interactant>
    <organismsDiffer>false</organismsDiffer>
    <experiments>3</experiments>
</comment>
<comment type="interaction">
    <interactant intactId="EBI-2363181">
        <id>Q9FLB1</id>
    </interactant>
    <interactant intactId="EBI-1238561">
        <id>O82754</id>
        <label>At4g23050</label>
    </interactant>
    <organismsDiffer>false</organismsDiffer>
    <experiments>3</experiments>
</comment>
<comment type="interaction">
    <interactant intactId="EBI-2363181">
        <id>Q9FLB1</id>
    </interactant>
    <interactant intactId="EBI-25529042">
        <id>A0A178VYJ2</id>
        <label>AXX17_At2g39860</label>
    </interactant>
    <organismsDiffer>false</organismsDiffer>
    <experiments>3</experiments>
</comment>
<comment type="interaction">
    <interactant intactId="EBI-2363181">
        <id>Q9FLB1</id>
    </interactant>
    <interactant intactId="EBI-2309302">
        <id>Q9CAJ0</id>
        <label>HAB1</label>
    </interactant>
    <organismsDiffer>false</organismsDiffer>
    <experiments>11</experiments>
</comment>
<comment type="interaction">
    <interactant intactId="EBI-2363181">
        <id>Q9FLB1</id>
    </interactant>
    <interactant intactId="EBI-15803614">
        <id>Q9LNP9</id>
        <label>HAB2</label>
    </interactant>
    <organismsDiffer>false</organismsDiffer>
    <experiments>5</experiments>
</comment>
<comment type="interaction">
    <interactant intactId="EBI-2363181">
        <id>Q9FLB1</id>
    </interactant>
    <interactant intactId="EBI-2324225">
        <id>Q9SN12</id>
        <label>MYB77</label>
    </interactant>
    <organismsDiffer>false</organismsDiffer>
    <experiments>3</experiments>
</comment>
<comment type="interaction">
    <interactant intactId="EBI-2363181">
        <id>Q9FLB1</id>
    </interactant>
    <interactant intactId="EBI-1764934">
        <id>P49598</id>
        <label>PP2CA</label>
    </interactant>
    <organismsDiffer>false</organismsDiffer>
    <experiments>3</experiments>
</comment>
<comment type="interaction">
    <interactant intactId="EBI-2363181">
        <id>Q9FLB1</id>
    </interactant>
    <interactant intactId="EBI-4426178">
        <id>Q9LT89</id>
        <label>TCP19</label>
    </interactant>
    <organismsDiffer>false</organismsDiffer>
    <experiments>3</experiments>
</comment>
<comment type="interaction">
    <interactant intactId="EBI-2363181">
        <id>Q9FLB1</id>
    </interactant>
    <interactant intactId="EBI-15192297">
        <id>Q9LQF0</id>
        <label>TCP23</label>
    </interactant>
    <organismsDiffer>false</organismsDiffer>
    <experiments>3</experiments>
</comment>
<comment type="interaction">
    <interactant intactId="EBI-2363181">
        <id>Q9FLB1</id>
    </interactant>
    <interactant intactId="EBI-25529069">
        <id>Q9FLC1</id>
    </interactant>
    <organismsDiffer>false</organismsDiffer>
    <experiments>3</experiments>
</comment>
<comment type="subcellular location">
    <subcellularLocation>
        <location evidence="7">Cytoplasm</location>
    </subcellularLocation>
    <subcellularLocation>
        <location evidence="7">Nucleus</location>
    </subcellularLocation>
    <subcellularLocation>
        <location evidence="1">Cell membrane</location>
    </subcellularLocation>
    <text evidence="2">Localizes at the plasma membrane in the presence of a CAR protein.</text>
</comment>
<comment type="domain">
    <text evidence="4">Upon interaction with ABA, the 'latch' and 'gate' loops change in conformation leading to a tight dimerization and the creation a surface that enables the receptor to dock into and inhibit the PP2C active site.</text>
</comment>
<comment type="similarity">
    <text evidence="12">Belongs to the PYR/PYL/RCAR abscisic acid intracellular receptor family.</text>
</comment>